<evidence type="ECO:0000255" key="1">
    <source>
        <dbReference type="HAMAP-Rule" id="MF_00147"/>
    </source>
</evidence>
<proteinExistence type="inferred from homology"/>
<organism>
    <name type="scientific">Herpetosiphon aurantiacus (strain ATCC 23779 / DSM 785 / 114-95)</name>
    <dbReference type="NCBI Taxonomy" id="316274"/>
    <lineage>
        <taxon>Bacteria</taxon>
        <taxon>Bacillati</taxon>
        <taxon>Chloroflexota</taxon>
        <taxon>Chloroflexia</taxon>
        <taxon>Herpetosiphonales</taxon>
        <taxon>Herpetosiphonaceae</taxon>
        <taxon>Herpetosiphon</taxon>
    </lineage>
</organism>
<gene>
    <name evidence="1" type="primary">tpiA</name>
    <name type="ordered locus">Haur_1923</name>
</gene>
<dbReference type="EC" id="5.3.1.1" evidence="1"/>
<dbReference type="EMBL" id="CP000875">
    <property type="protein sequence ID" value="ABX04566.1"/>
    <property type="molecule type" value="Genomic_DNA"/>
</dbReference>
<dbReference type="SMR" id="A9AUN9"/>
<dbReference type="FunCoup" id="A9AUN9">
    <property type="interactions" value="483"/>
</dbReference>
<dbReference type="STRING" id="316274.Haur_1923"/>
<dbReference type="KEGG" id="hau:Haur_1923"/>
<dbReference type="eggNOG" id="COG0149">
    <property type="taxonomic scope" value="Bacteria"/>
</dbReference>
<dbReference type="HOGENOM" id="CLU_024251_2_3_0"/>
<dbReference type="InParanoid" id="A9AUN9"/>
<dbReference type="UniPathway" id="UPA00109">
    <property type="reaction ID" value="UER00189"/>
</dbReference>
<dbReference type="UniPathway" id="UPA00138"/>
<dbReference type="Proteomes" id="UP000000787">
    <property type="component" value="Chromosome"/>
</dbReference>
<dbReference type="GO" id="GO:0005829">
    <property type="term" value="C:cytosol"/>
    <property type="evidence" value="ECO:0007669"/>
    <property type="project" value="TreeGrafter"/>
</dbReference>
<dbReference type="GO" id="GO:0004807">
    <property type="term" value="F:triose-phosphate isomerase activity"/>
    <property type="evidence" value="ECO:0007669"/>
    <property type="project" value="UniProtKB-UniRule"/>
</dbReference>
<dbReference type="GO" id="GO:0006094">
    <property type="term" value="P:gluconeogenesis"/>
    <property type="evidence" value="ECO:0007669"/>
    <property type="project" value="UniProtKB-UniRule"/>
</dbReference>
<dbReference type="GO" id="GO:0046166">
    <property type="term" value="P:glyceraldehyde-3-phosphate biosynthetic process"/>
    <property type="evidence" value="ECO:0007669"/>
    <property type="project" value="TreeGrafter"/>
</dbReference>
<dbReference type="GO" id="GO:0019563">
    <property type="term" value="P:glycerol catabolic process"/>
    <property type="evidence" value="ECO:0007669"/>
    <property type="project" value="TreeGrafter"/>
</dbReference>
<dbReference type="GO" id="GO:0006096">
    <property type="term" value="P:glycolytic process"/>
    <property type="evidence" value="ECO:0007669"/>
    <property type="project" value="UniProtKB-UniRule"/>
</dbReference>
<dbReference type="CDD" id="cd00311">
    <property type="entry name" value="TIM"/>
    <property type="match status" value="1"/>
</dbReference>
<dbReference type="FunFam" id="3.20.20.70:FF:000016">
    <property type="entry name" value="Triosephosphate isomerase"/>
    <property type="match status" value="1"/>
</dbReference>
<dbReference type="Gene3D" id="3.20.20.70">
    <property type="entry name" value="Aldolase class I"/>
    <property type="match status" value="1"/>
</dbReference>
<dbReference type="HAMAP" id="MF_00147_B">
    <property type="entry name" value="TIM_B"/>
    <property type="match status" value="1"/>
</dbReference>
<dbReference type="InterPro" id="IPR013785">
    <property type="entry name" value="Aldolase_TIM"/>
</dbReference>
<dbReference type="InterPro" id="IPR035990">
    <property type="entry name" value="TIM_sf"/>
</dbReference>
<dbReference type="InterPro" id="IPR022896">
    <property type="entry name" value="TrioseP_Isoase_bac/euk"/>
</dbReference>
<dbReference type="InterPro" id="IPR000652">
    <property type="entry name" value="Triosephosphate_isomerase"/>
</dbReference>
<dbReference type="InterPro" id="IPR020861">
    <property type="entry name" value="Triosephosphate_isomerase_AS"/>
</dbReference>
<dbReference type="NCBIfam" id="TIGR00419">
    <property type="entry name" value="tim"/>
    <property type="match status" value="1"/>
</dbReference>
<dbReference type="PANTHER" id="PTHR21139">
    <property type="entry name" value="TRIOSEPHOSPHATE ISOMERASE"/>
    <property type="match status" value="1"/>
</dbReference>
<dbReference type="PANTHER" id="PTHR21139:SF42">
    <property type="entry name" value="TRIOSEPHOSPHATE ISOMERASE"/>
    <property type="match status" value="1"/>
</dbReference>
<dbReference type="Pfam" id="PF00121">
    <property type="entry name" value="TIM"/>
    <property type="match status" value="1"/>
</dbReference>
<dbReference type="SUPFAM" id="SSF51351">
    <property type="entry name" value="Triosephosphate isomerase (TIM)"/>
    <property type="match status" value="1"/>
</dbReference>
<dbReference type="PROSITE" id="PS00171">
    <property type="entry name" value="TIM_1"/>
    <property type="match status" value="1"/>
</dbReference>
<dbReference type="PROSITE" id="PS51440">
    <property type="entry name" value="TIM_2"/>
    <property type="match status" value="1"/>
</dbReference>
<protein>
    <recommendedName>
        <fullName evidence="1">Triosephosphate isomerase</fullName>
        <shortName evidence="1">TIM</shortName>
        <shortName evidence="1">TPI</shortName>
        <ecNumber evidence="1">5.3.1.1</ecNumber>
    </recommendedName>
    <alternativeName>
        <fullName evidence="1">Triose-phosphate isomerase</fullName>
    </alternativeName>
</protein>
<name>TPIS_HERA2</name>
<accession>A9AUN9</accession>
<sequence length="250" mass="26351">MRRPLLAGNWKMHYGVSEGVALVEALSADLTDLTDRDVLVCPPFTLLGSLAPLLDGTAVALGAQNMHYEAKGAYTGEIAPQMLKELGCSYVILGHSERRQYFGETDALINRKAHAALANGLKPIVCVGEVKAERDSGQAESVVVGQLRGSLAGLSAEQLRGVVIAYEPVWAIGTGDTATPADAQAMHARIRAELAALSDQATADAVIIQYGGSVKPDNVDELMAQPDIDGALVGGASLKAADFIRIVRFK</sequence>
<keyword id="KW-0963">Cytoplasm</keyword>
<keyword id="KW-0312">Gluconeogenesis</keyword>
<keyword id="KW-0324">Glycolysis</keyword>
<keyword id="KW-0413">Isomerase</keyword>
<comment type="function">
    <text evidence="1">Involved in the gluconeogenesis. Catalyzes stereospecifically the conversion of dihydroxyacetone phosphate (DHAP) to D-glyceraldehyde-3-phosphate (G3P).</text>
</comment>
<comment type="catalytic activity">
    <reaction evidence="1">
        <text>D-glyceraldehyde 3-phosphate = dihydroxyacetone phosphate</text>
        <dbReference type="Rhea" id="RHEA:18585"/>
        <dbReference type="ChEBI" id="CHEBI:57642"/>
        <dbReference type="ChEBI" id="CHEBI:59776"/>
        <dbReference type="EC" id="5.3.1.1"/>
    </reaction>
</comment>
<comment type="pathway">
    <text evidence="1">Carbohydrate biosynthesis; gluconeogenesis.</text>
</comment>
<comment type="pathway">
    <text evidence="1">Carbohydrate degradation; glycolysis; D-glyceraldehyde 3-phosphate from glycerone phosphate: step 1/1.</text>
</comment>
<comment type="subunit">
    <text evidence="1">Homodimer.</text>
</comment>
<comment type="subcellular location">
    <subcellularLocation>
        <location evidence="1">Cytoplasm</location>
    </subcellularLocation>
</comment>
<comment type="similarity">
    <text evidence="1">Belongs to the triosephosphate isomerase family.</text>
</comment>
<reference key="1">
    <citation type="journal article" date="2011" name="Stand. Genomic Sci.">
        <title>Complete genome sequence of the filamentous gliding predatory bacterium Herpetosiphon aurantiacus type strain (114-95(T)).</title>
        <authorList>
            <person name="Kiss H."/>
            <person name="Nett M."/>
            <person name="Domin N."/>
            <person name="Martin K."/>
            <person name="Maresca J.A."/>
            <person name="Copeland A."/>
            <person name="Lapidus A."/>
            <person name="Lucas S."/>
            <person name="Berry K.W."/>
            <person name="Glavina Del Rio T."/>
            <person name="Dalin E."/>
            <person name="Tice H."/>
            <person name="Pitluck S."/>
            <person name="Richardson P."/>
            <person name="Bruce D."/>
            <person name="Goodwin L."/>
            <person name="Han C."/>
            <person name="Detter J.C."/>
            <person name="Schmutz J."/>
            <person name="Brettin T."/>
            <person name="Land M."/>
            <person name="Hauser L."/>
            <person name="Kyrpides N.C."/>
            <person name="Ivanova N."/>
            <person name="Goeker M."/>
            <person name="Woyke T."/>
            <person name="Klenk H.P."/>
            <person name="Bryant D.A."/>
        </authorList>
    </citation>
    <scope>NUCLEOTIDE SEQUENCE [LARGE SCALE GENOMIC DNA]</scope>
    <source>
        <strain>ATCC 23779 / DSM 785 / 114-95</strain>
    </source>
</reference>
<feature type="chain" id="PRO_1000096506" description="Triosephosphate isomerase">
    <location>
        <begin position="1"/>
        <end position="250"/>
    </location>
</feature>
<feature type="active site" description="Electrophile" evidence="1">
    <location>
        <position position="95"/>
    </location>
</feature>
<feature type="active site" description="Proton acceptor" evidence="1">
    <location>
        <position position="167"/>
    </location>
</feature>
<feature type="binding site" evidence="1">
    <location>
        <begin position="9"/>
        <end position="11"/>
    </location>
    <ligand>
        <name>substrate</name>
    </ligand>
</feature>
<feature type="binding site" evidence="1">
    <location>
        <position position="173"/>
    </location>
    <ligand>
        <name>substrate</name>
    </ligand>
</feature>
<feature type="binding site" evidence="1">
    <location>
        <position position="213"/>
    </location>
    <ligand>
        <name>substrate</name>
    </ligand>
</feature>
<feature type="binding site" evidence="1">
    <location>
        <begin position="234"/>
        <end position="235"/>
    </location>
    <ligand>
        <name>substrate</name>
    </ligand>
</feature>